<feature type="signal peptide" evidence="1">
    <location>
        <begin position="1"/>
        <end position="17"/>
    </location>
</feature>
<feature type="chain" id="PRO_0000342620" description="Small integral membrane protein 7">
    <location>
        <begin position="18"/>
        <end position="76"/>
    </location>
</feature>
<feature type="topological domain" description="Extracellular" evidence="1">
    <location>
        <begin position="18"/>
        <end position="54"/>
    </location>
</feature>
<feature type="transmembrane region" description="Helical" evidence="1">
    <location>
        <begin position="55"/>
        <end position="75"/>
    </location>
</feature>
<feature type="topological domain" description="Cytoplasmic" evidence="1">
    <location>
        <position position="76"/>
    </location>
</feature>
<evidence type="ECO:0000255" key="1"/>
<evidence type="ECO:0000305" key="2"/>
<organism>
    <name type="scientific">Xenopus tropicalis</name>
    <name type="common">Western clawed frog</name>
    <name type="synonym">Silurana tropicalis</name>
    <dbReference type="NCBI Taxonomy" id="8364"/>
    <lineage>
        <taxon>Eukaryota</taxon>
        <taxon>Metazoa</taxon>
        <taxon>Chordata</taxon>
        <taxon>Craniata</taxon>
        <taxon>Vertebrata</taxon>
        <taxon>Euteleostomi</taxon>
        <taxon>Amphibia</taxon>
        <taxon>Batrachia</taxon>
        <taxon>Anura</taxon>
        <taxon>Pipoidea</taxon>
        <taxon>Pipidae</taxon>
        <taxon>Xenopodinae</taxon>
        <taxon>Xenopus</taxon>
        <taxon>Silurana</taxon>
    </lineage>
</organism>
<comment type="subcellular location">
    <subcellularLocation>
        <location evidence="2">Membrane</location>
        <topology evidence="2">Single-pass type I membrane protein</topology>
    </subcellularLocation>
</comment>
<comment type="similarity">
    <text evidence="2">Belongs to the SMIM7 family.</text>
</comment>
<protein>
    <recommendedName>
        <fullName>Small integral membrane protein 7</fullName>
    </recommendedName>
</protein>
<accession>Q6P317</accession>
<name>SMIM7_XENTR</name>
<keyword id="KW-0472">Membrane</keyword>
<keyword id="KW-1185">Reference proteome</keyword>
<keyword id="KW-0732">Signal</keyword>
<keyword id="KW-0812">Transmembrane</keyword>
<keyword id="KW-1133">Transmembrane helix</keyword>
<proteinExistence type="inferred from homology"/>
<reference key="1">
    <citation type="submission" date="2006-10" db="EMBL/GenBank/DDBJ databases">
        <authorList>
            <consortium name="Sanger Xenopus tropicalis EST/cDNA project"/>
        </authorList>
    </citation>
    <scope>NUCLEOTIDE SEQUENCE [LARGE SCALE MRNA]</scope>
    <source>
        <tissue>Egg</tissue>
    </source>
</reference>
<reference key="2">
    <citation type="submission" date="2003-12" db="EMBL/GenBank/DDBJ databases">
        <authorList>
            <consortium name="NIH - Xenopus Gene Collection (XGC) project"/>
        </authorList>
    </citation>
    <scope>NUCLEOTIDE SEQUENCE [LARGE SCALE MRNA]</scope>
    <source>
        <tissue>Embryo</tissue>
    </source>
</reference>
<sequence length="76" mass="8661">MIGDLLLFGTLLVNAGAVLNFKLKKKESQGFGDDLMTEATTGDNIREFLLSLRYFRIFIALWNIFMMFCMIVLFGS</sequence>
<dbReference type="EMBL" id="CR926262">
    <property type="protein sequence ID" value="CAJ81439.1"/>
    <property type="molecule type" value="mRNA"/>
</dbReference>
<dbReference type="EMBL" id="BC064217">
    <property type="protein sequence ID" value="AAH64217.1"/>
    <property type="molecule type" value="mRNA"/>
</dbReference>
<dbReference type="RefSeq" id="NP_989317.1">
    <property type="nucleotide sequence ID" value="NM_203986.2"/>
</dbReference>
<dbReference type="FunCoup" id="Q6P317">
    <property type="interactions" value="612"/>
</dbReference>
<dbReference type="STRING" id="8364.ENSXETP00000037099"/>
<dbReference type="PaxDb" id="8364-ENSXETP00000054434"/>
<dbReference type="DNASU" id="394942"/>
<dbReference type="GeneID" id="394942"/>
<dbReference type="KEGG" id="xtr:394942"/>
<dbReference type="AGR" id="Xenbase:XB-GENE-5839015"/>
<dbReference type="CTD" id="79086"/>
<dbReference type="Xenbase" id="XB-GENE-5839015">
    <property type="gene designation" value="smim7"/>
</dbReference>
<dbReference type="eggNOG" id="ENOG502S4E0">
    <property type="taxonomic scope" value="Eukaryota"/>
</dbReference>
<dbReference type="HOGENOM" id="CLU_181165_0_0_1"/>
<dbReference type="InParanoid" id="Q6P317"/>
<dbReference type="OMA" id="LWNILVM"/>
<dbReference type="OrthoDB" id="10047572at2759"/>
<dbReference type="PhylomeDB" id="Q6P317"/>
<dbReference type="TreeFam" id="TF332999"/>
<dbReference type="Proteomes" id="UP000008143">
    <property type="component" value="Chromosome 1"/>
</dbReference>
<dbReference type="Bgee" id="ENSXETG00000025580">
    <property type="expression patterns" value="Expressed in egg cell and 15 other cell types or tissues"/>
</dbReference>
<dbReference type="GO" id="GO:0016020">
    <property type="term" value="C:membrane"/>
    <property type="evidence" value="ECO:0007669"/>
    <property type="project" value="UniProtKB-SubCell"/>
</dbReference>
<dbReference type="InterPro" id="IPR037659">
    <property type="entry name" value="SMIM7"/>
</dbReference>
<dbReference type="PANTHER" id="PTHR28622">
    <property type="entry name" value="SMALL INTEGRAL MEMBRANE PROTEIN 7"/>
    <property type="match status" value="1"/>
</dbReference>
<dbReference type="PANTHER" id="PTHR28622:SF1">
    <property type="entry name" value="SMALL INTEGRAL MEMBRANE PROTEIN 7"/>
    <property type="match status" value="1"/>
</dbReference>
<gene>
    <name type="primary">smim7</name>
    <name type="ORF">TEgg109m01.1</name>
</gene>